<proteinExistence type="inferred from homology"/>
<gene>
    <name type="ordered locus">PC1_1703</name>
</gene>
<comment type="similarity">
    <text evidence="1">Belongs to the UPF0145 family.</text>
</comment>
<protein>
    <recommendedName>
        <fullName evidence="1">UPF0145 protein PC1_1703</fullName>
    </recommendedName>
</protein>
<sequence length="107" mass="11522">MQLSTTPTLEGFTITEYCGVVTGEAILGANIFRDFFASIRDVVGGRSGAYEKELRKARQIAFKELQEQAADLGANAVVGIDLDYETVGKDGSMLMVTVSGTAVKVRR</sequence>
<organism>
    <name type="scientific">Pectobacterium carotovorum subsp. carotovorum (strain PC1)</name>
    <dbReference type="NCBI Taxonomy" id="561230"/>
    <lineage>
        <taxon>Bacteria</taxon>
        <taxon>Pseudomonadati</taxon>
        <taxon>Pseudomonadota</taxon>
        <taxon>Gammaproteobacteria</taxon>
        <taxon>Enterobacterales</taxon>
        <taxon>Pectobacteriaceae</taxon>
        <taxon>Pectobacterium</taxon>
    </lineage>
</organism>
<name>Y1703_PECCP</name>
<evidence type="ECO:0000255" key="1">
    <source>
        <dbReference type="HAMAP-Rule" id="MF_00338"/>
    </source>
</evidence>
<dbReference type="EMBL" id="CP001657">
    <property type="protein sequence ID" value="ACT12744.1"/>
    <property type="molecule type" value="Genomic_DNA"/>
</dbReference>
<dbReference type="RefSeq" id="WP_015839959.1">
    <property type="nucleotide sequence ID" value="NC_012917.1"/>
</dbReference>
<dbReference type="SMR" id="C6DEQ9"/>
<dbReference type="STRING" id="561230.PC1_1703"/>
<dbReference type="KEGG" id="pct:PC1_1703"/>
<dbReference type="eggNOG" id="COG0393">
    <property type="taxonomic scope" value="Bacteria"/>
</dbReference>
<dbReference type="HOGENOM" id="CLU_117144_3_2_6"/>
<dbReference type="OrthoDB" id="9796448at2"/>
<dbReference type="Proteomes" id="UP000002736">
    <property type="component" value="Chromosome"/>
</dbReference>
<dbReference type="Gene3D" id="3.30.110.70">
    <property type="entry name" value="Hypothetical protein apc22750. Chain B"/>
    <property type="match status" value="1"/>
</dbReference>
<dbReference type="HAMAP" id="MF_00338">
    <property type="entry name" value="UPF0145"/>
    <property type="match status" value="1"/>
</dbReference>
<dbReference type="InterPro" id="IPR035439">
    <property type="entry name" value="UPF0145_dom_sf"/>
</dbReference>
<dbReference type="InterPro" id="IPR002765">
    <property type="entry name" value="UPF0145_YbjQ-like"/>
</dbReference>
<dbReference type="NCBIfam" id="NF002776">
    <property type="entry name" value="PRK02877.1"/>
    <property type="match status" value="1"/>
</dbReference>
<dbReference type="PANTHER" id="PTHR34068">
    <property type="entry name" value="UPF0145 PROTEIN YBJQ"/>
    <property type="match status" value="1"/>
</dbReference>
<dbReference type="PANTHER" id="PTHR34068:SF1">
    <property type="entry name" value="UPF0145 PROTEIN YBJQ"/>
    <property type="match status" value="1"/>
</dbReference>
<dbReference type="Pfam" id="PF01906">
    <property type="entry name" value="YbjQ_1"/>
    <property type="match status" value="1"/>
</dbReference>
<dbReference type="SUPFAM" id="SSF117782">
    <property type="entry name" value="YbjQ-like"/>
    <property type="match status" value="1"/>
</dbReference>
<feature type="chain" id="PRO_1000205242" description="UPF0145 protein PC1_1703">
    <location>
        <begin position="1"/>
        <end position="107"/>
    </location>
</feature>
<reference key="1">
    <citation type="submission" date="2009-07" db="EMBL/GenBank/DDBJ databases">
        <title>Complete sequence of Pectobacterium carotovorum subsp. carotovorum PC1.</title>
        <authorList>
            <consortium name="US DOE Joint Genome Institute"/>
            <person name="Lucas S."/>
            <person name="Copeland A."/>
            <person name="Lapidus A."/>
            <person name="Glavina del Rio T."/>
            <person name="Tice H."/>
            <person name="Bruce D."/>
            <person name="Goodwin L."/>
            <person name="Pitluck S."/>
            <person name="Munk A.C."/>
            <person name="Brettin T."/>
            <person name="Detter J.C."/>
            <person name="Han C."/>
            <person name="Tapia R."/>
            <person name="Larimer F."/>
            <person name="Land M."/>
            <person name="Hauser L."/>
            <person name="Kyrpides N."/>
            <person name="Mikhailova N."/>
            <person name="Balakrishnan V."/>
            <person name="Glasner J."/>
            <person name="Perna N.T."/>
        </authorList>
    </citation>
    <scope>NUCLEOTIDE SEQUENCE [LARGE SCALE GENOMIC DNA]</scope>
    <source>
        <strain>PC1</strain>
    </source>
</reference>
<accession>C6DEQ9</accession>